<comment type="function">
    <text evidence="1">Cell division factor that enhances FtsZ-ring assembly. Directly interacts with FtsZ and promotes bundling of FtsZ protofilaments, with a reduction in FtsZ GTPase activity.</text>
</comment>
<comment type="subunit">
    <text evidence="1">Interacts with FtsZ.</text>
</comment>
<comment type="subcellular location">
    <subcellularLocation>
        <location evidence="1">Cytoplasm</location>
    </subcellularLocation>
    <text evidence="1">Localizes to mid-cell in an FtsZ-dependent manner.</text>
</comment>
<comment type="similarity">
    <text evidence="1">Belongs to the ZapD family.</text>
</comment>
<accession>B5BLD5</accession>
<organism>
    <name type="scientific">Salmonella paratyphi A (strain AKU_12601)</name>
    <dbReference type="NCBI Taxonomy" id="554290"/>
    <lineage>
        <taxon>Bacteria</taxon>
        <taxon>Pseudomonadati</taxon>
        <taxon>Pseudomonadota</taxon>
        <taxon>Gammaproteobacteria</taxon>
        <taxon>Enterobacterales</taxon>
        <taxon>Enterobacteriaceae</taxon>
        <taxon>Salmonella</taxon>
    </lineage>
</organism>
<feature type="chain" id="PRO_1000136954" description="Cell division protein ZapD">
    <location>
        <begin position="1"/>
        <end position="247"/>
    </location>
</feature>
<sequence>MHTQVLFEHPLNEKMRTWLRIEFLIQQLSINLPIADHAGALHFFRNISDLLDVFERGEVRTELLKELERQQRKLQAWVEVPGVDQDRIEALRQQLKSAGSVLISAPRIGQQLREDRLIALVRQRLSIPGGCCSFDLPTLHIWLHLQQAQRDAQIESWLASLNPLTQALTLVLDLIRNSAPFRKQTSLNGFYQDNGDDADLLRLMLTLDSQLYPQISGHKSRFAIRFMPLDSENGLVPERLDFELACC</sequence>
<evidence type="ECO:0000255" key="1">
    <source>
        <dbReference type="HAMAP-Rule" id="MF_01092"/>
    </source>
</evidence>
<dbReference type="EMBL" id="FM200053">
    <property type="protein sequence ID" value="CAR58250.1"/>
    <property type="molecule type" value="Genomic_DNA"/>
</dbReference>
<dbReference type="RefSeq" id="WP_000557441.1">
    <property type="nucleotide sequence ID" value="NC_011147.1"/>
</dbReference>
<dbReference type="SMR" id="B5BLD5"/>
<dbReference type="KEGG" id="sek:SSPA0139"/>
<dbReference type="HOGENOM" id="CLU_076303_0_0_6"/>
<dbReference type="Proteomes" id="UP000001869">
    <property type="component" value="Chromosome"/>
</dbReference>
<dbReference type="GO" id="GO:0032153">
    <property type="term" value="C:cell division site"/>
    <property type="evidence" value="ECO:0007669"/>
    <property type="project" value="TreeGrafter"/>
</dbReference>
<dbReference type="GO" id="GO:0005737">
    <property type="term" value="C:cytoplasm"/>
    <property type="evidence" value="ECO:0007669"/>
    <property type="project" value="UniProtKB-SubCell"/>
</dbReference>
<dbReference type="GO" id="GO:0000917">
    <property type="term" value="P:division septum assembly"/>
    <property type="evidence" value="ECO:0007669"/>
    <property type="project" value="UniProtKB-KW"/>
</dbReference>
<dbReference type="GO" id="GO:0043093">
    <property type="term" value="P:FtsZ-dependent cytokinesis"/>
    <property type="evidence" value="ECO:0007669"/>
    <property type="project" value="UniProtKB-UniRule"/>
</dbReference>
<dbReference type="FunFam" id="1.10.3900.10:FF:000001">
    <property type="entry name" value="Cell division protein ZapD"/>
    <property type="match status" value="1"/>
</dbReference>
<dbReference type="FunFam" id="2.60.440.10:FF:000001">
    <property type="entry name" value="Cell division protein ZapD"/>
    <property type="match status" value="1"/>
</dbReference>
<dbReference type="Gene3D" id="1.10.3900.10">
    <property type="entry name" value="YacF-like"/>
    <property type="match status" value="1"/>
</dbReference>
<dbReference type="Gene3D" id="2.60.440.10">
    <property type="entry name" value="YacF-like domains"/>
    <property type="match status" value="1"/>
</dbReference>
<dbReference type="HAMAP" id="MF_01092">
    <property type="entry name" value="ZapD"/>
    <property type="match status" value="1"/>
</dbReference>
<dbReference type="InterPro" id="IPR009777">
    <property type="entry name" value="ZapD"/>
</dbReference>
<dbReference type="InterPro" id="IPR027462">
    <property type="entry name" value="ZapD_C"/>
</dbReference>
<dbReference type="InterPro" id="IPR036268">
    <property type="entry name" value="ZapD_sf"/>
</dbReference>
<dbReference type="NCBIfam" id="NF003653">
    <property type="entry name" value="PRK05287.1-1"/>
    <property type="match status" value="1"/>
</dbReference>
<dbReference type="NCBIfam" id="NF003655">
    <property type="entry name" value="PRK05287.1-3"/>
    <property type="match status" value="1"/>
</dbReference>
<dbReference type="PANTHER" id="PTHR39455">
    <property type="entry name" value="CELL DIVISION PROTEIN ZAPD"/>
    <property type="match status" value="1"/>
</dbReference>
<dbReference type="PANTHER" id="PTHR39455:SF1">
    <property type="entry name" value="CELL DIVISION PROTEIN ZAPD"/>
    <property type="match status" value="1"/>
</dbReference>
<dbReference type="Pfam" id="PF07072">
    <property type="entry name" value="ZapD"/>
    <property type="match status" value="1"/>
</dbReference>
<dbReference type="SUPFAM" id="SSF160950">
    <property type="entry name" value="YacF-like"/>
    <property type="match status" value="1"/>
</dbReference>
<gene>
    <name evidence="1" type="primary">zapD</name>
    <name type="ordered locus">SSPA0139</name>
</gene>
<keyword id="KW-0131">Cell cycle</keyword>
<keyword id="KW-0132">Cell division</keyword>
<keyword id="KW-0963">Cytoplasm</keyword>
<keyword id="KW-0717">Septation</keyword>
<protein>
    <recommendedName>
        <fullName evidence="1">Cell division protein ZapD</fullName>
    </recommendedName>
    <alternativeName>
        <fullName evidence="1">Z ring-associated protein D</fullName>
    </alternativeName>
</protein>
<proteinExistence type="inferred from homology"/>
<reference key="1">
    <citation type="journal article" date="2009" name="BMC Genomics">
        <title>Pseudogene accumulation in the evolutionary histories of Salmonella enterica serovars Paratyphi A and Typhi.</title>
        <authorList>
            <person name="Holt K.E."/>
            <person name="Thomson N.R."/>
            <person name="Wain J."/>
            <person name="Langridge G.C."/>
            <person name="Hasan R."/>
            <person name="Bhutta Z.A."/>
            <person name="Quail M.A."/>
            <person name="Norbertczak H."/>
            <person name="Walker D."/>
            <person name="Simmonds M."/>
            <person name="White B."/>
            <person name="Bason N."/>
            <person name="Mungall K."/>
            <person name="Dougan G."/>
            <person name="Parkhill J."/>
        </authorList>
    </citation>
    <scope>NUCLEOTIDE SEQUENCE [LARGE SCALE GENOMIC DNA]</scope>
    <source>
        <strain>AKU_12601</strain>
    </source>
</reference>
<name>ZAPD_SALPK</name>